<protein>
    <recommendedName>
        <fullName>Angiotensin-converting enzyme-related protein</fullName>
        <ecNumber>3.4.15.1</ecNumber>
    </recommendedName>
</protein>
<name>ACER_DROME</name>
<comment type="function">
    <text evidence="4">May be involved in the specific maturation or degradation of a number of bioactive peptides. May have a role in the specification of heart progenitors.</text>
</comment>
<comment type="catalytic activity">
    <reaction>
        <text>Release of a C-terminal dipeptide, oligopeptide-|-Xaa-Yaa, when Xaa is not Pro, and Yaa is neither Asp nor Glu. Thus, conversion of angiotensin I to angiotensin II, with increase in vasoconstrictor activity, but no action on angiotensin II.</text>
        <dbReference type="EC" id="3.4.15.1"/>
    </reaction>
</comment>
<comment type="cofactor">
    <cofactor evidence="1">
        <name>Zn(2+)</name>
        <dbReference type="ChEBI" id="CHEBI:29105"/>
    </cofactor>
    <text evidence="1">Binds 1 zinc ion per subunit.</text>
</comment>
<comment type="activity regulation">
    <text evidence="6">Inhibited by captopril, lisinopril, trandolaprilat, fosinoprilat and enalaprilat.</text>
</comment>
<comment type="biophysicochemical properties">
    <kinetics>
        <KM evidence="6">1.2 mM for Hip-His-Leu</KM>
        <KM evidence="6">4.35 mM for Hip-His-Leu-NH(2)</KM>
        <KM evidence="6">40.6 uM for (Leu5)enkephalin</KM>
        <KM evidence="6">949 uM for (Leu5)enkephalinamide</KM>
    </kinetics>
    <phDependence>
        <text evidence="6">Optimum pH is 8.6.</text>
    </phDependence>
</comment>
<comment type="subcellular location">
    <subcellularLocation>
        <location evidence="6">Secreted</location>
        <location evidence="6">Extracellular space</location>
    </subcellularLocation>
</comment>
<comment type="developmental stage">
    <text evidence="5">Expressed in presumptive heart cells during dorsal closure.</text>
</comment>
<comment type="PTM">
    <text evidence="6">Glycosylated.</text>
</comment>
<comment type="disruption phenotype">
    <text evidence="4">Defective heart morphogenesis leading to lethality.</text>
</comment>
<comment type="miscellaneous">
    <text>In contrast to ance, does not hydrolyze angiotensin I.</text>
</comment>
<comment type="similarity">
    <text evidence="7">Belongs to the peptidase M2 family.</text>
</comment>
<gene>
    <name type="primary">Acer</name>
    <name type="ORF">CG10593</name>
</gene>
<proteinExistence type="evidence at protein level"/>
<dbReference type="EC" id="3.4.15.1"/>
<dbReference type="EMBL" id="X96913">
    <property type="protein sequence ID" value="CAA65632.1"/>
    <property type="molecule type" value="mRNA"/>
</dbReference>
<dbReference type="EMBL" id="AE014134">
    <property type="protein sequence ID" value="AAF52693.1"/>
    <property type="molecule type" value="Genomic_DNA"/>
</dbReference>
<dbReference type="EMBL" id="AY051750">
    <property type="protein sequence ID" value="AAK93174.1"/>
    <property type="molecule type" value="mRNA"/>
</dbReference>
<dbReference type="PIR" id="JC5374">
    <property type="entry name" value="JC5374"/>
</dbReference>
<dbReference type="RefSeq" id="NP_001260258.1">
    <property type="nucleotide sequence ID" value="NM_001273329.1"/>
</dbReference>
<dbReference type="RefSeq" id="NP_477195.1">
    <property type="nucleotide sequence ID" value="NM_057847.4"/>
</dbReference>
<dbReference type="SMR" id="Q9VLJ6"/>
<dbReference type="BioGRID" id="60309">
    <property type="interactions" value="2"/>
</dbReference>
<dbReference type="FunCoup" id="Q9VLJ6">
    <property type="interactions" value="7"/>
</dbReference>
<dbReference type="IntAct" id="Q9VLJ6">
    <property type="interactions" value="2"/>
</dbReference>
<dbReference type="STRING" id="7227.FBpp0305608"/>
<dbReference type="MEROPS" id="M02.002"/>
<dbReference type="GlyGen" id="Q9VLJ6">
    <property type="glycosylation" value="3 sites"/>
</dbReference>
<dbReference type="PaxDb" id="7227-FBpp0305608"/>
<dbReference type="DNASU" id="34189"/>
<dbReference type="EnsemblMetazoa" id="FBtr0079685">
    <property type="protein sequence ID" value="FBpp0079297"/>
    <property type="gene ID" value="FBgn0016122"/>
</dbReference>
<dbReference type="EnsemblMetazoa" id="FBtr0333416">
    <property type="protein sequence ID" value="FBpp0305608"/>
    <property type="gene ID" value="FBgn0016122"/>
</dbReference>
<dbReference type="GeneID" id="34189"/>
<dbReference type="KEGG" id="dme:Dmel_CG10593"/>
<dbReference type="AGR" id="FB:FBgn0016122"/>
<dbReference type="CTD" id="34189"/>
<dbReference type="FlyBase" id="FBgn0016122">
    <property type="gene designation" value="Acer"/>
</dbReference>
<dbReference type="VEuPathDB" id="VectorBase:FBgn0016122"/>
<dbReference type="eggNOG" id="KOG3690">
    <property type="taxonomic scope" value="Eukaryota"/>
</dbReference>
<dbReference type="GeneTree" id="ENSGT00940000163600"/>
<dbReference type="HOGENOM" id="CLU_014364_3_3_1"/>
<dbReference type="InParanoid" id="Q9VLJ6"/>
<dbReference type="OMA" id="FYRQIHG"/>
<dbReference type="OrthoDB" id="10029630at2759"/>
<dbReference type="PhylomeDB" id="Q9VLJ6"/>
<dbReference type="Reactome" id="R-DME-2022377">
    <property type="pathway name" value="Metabolism of Angiotensinogen to Angiotensins"/>
</dbReference>
<dbReference type="SABIO-RK" id="Q9VLJ6"/>
<dbReference type="BioGRID-ORCS" id="34189">
    <property type="hits" value="0 hits in 3 CRISPR screens"/>
</dbReference>
<dbReference type="GenomeRNAi" id="34189"/>
<dbReference type="PRO" id="PR:Q9VLJ6"/>
<dbReference type="Proteomes" id="UP000000803">
    <property type="component" value="Chromosome 2L"/>
</dbReference>
<dbReference type="Bgee" id="FBgn0016122">
    <property type="expression patterns" value="Expressed in dorsal appendage forming follicle cell in ovary and 104 other cell types or tissues"/>
</dbReference>
<dbReference type="ExpressionAtlas" id="Q9VLJ6">
    <property type="expression patterns" value="baseline and differential"/>
</dbReference>
<dbReference type="GO" id="GO:0005576">
    <property type="term" value="C:extracellular region"/>
    <property type="evidence" value="ECO:0000314"/>
    <property type="project" value="UniProtKB"/>
</dbReference>
<dbReference type="GO" id="GO:0005615">
    <property type="term" value="C:extracellular space"/>
    <property type="evidence" value="ECO:0000314"/>
    <property type="project" value="FlyBase"/>
</dbReference>
<dbReference type="GO" id="GO:0005886">
    <property type="term" value="C:plasma membrane"/>
    <property type="evidence" value="ECO:0000318"/>
    <property type="project" value="GO_Central"/>
</dbReference>
<dbReference type="GO" id="GO:0004180">
    <property type="term" value="F:carboxypeptidase activity"/>
    <property type="evidence" value="ECO:0007669"/>
    <property type="project" value="UniProtKB-KW"/>
</dbReference>
<dbReference type="GO" id="GO:0004222">
    <property type="term" value="F:metalloendopeptidase activity"/>
    <property type="evidence" value="ECO:0000250"/>
    <property type="project" value="FlyBase"/>
</dbReference>
<dbReference type="GO" id="GO:0008237">
    <property type="term" value="F:metallopeptidase activity"/>
    <property type="evidence" value="ECO:0000318"/>
    <property type="project" value="GO_Central"/>
</dbReference>
<dbReference type="GO" id="GO:0008241">
    <property type="term" value="F:peptidyl-dipeptidase activity"/>
    <property type="evidence" value="ECO:0000314"/>
    <property type="project" value="FlyBase"/>
</dbReference>
<dbReference type="GO" id="GO:0008270">
    <property type="term" value="F:zinc ion binding"/>
    <property type="evidence" value="ECO:0000255"/>
    <property type="project" value="FlyBase"/>
</dbReference>
<dbReference type="GO" id="GO:0007507">
    <property type="term" value="P:heart development"/>
    <property type="evidence" value="ECO:0000315"/>
    <property type="project" value="UniProtKB"/>
</dbReference>
<dbReference type="GO" id="GO:0003007">
    <property type="term" value="P:heart morphogenesis"/>
    <property type="evidence" value="ECO:0000315"/>
    <property type="project" value="FlyBase"/>
</dbReference>
<dbReference type="GO" id="GO:0045938">
    <property type="term" value="P:positive regulation of circadian sleep/wake cycle, sleep"/>
    <property type="evidence" value="ECO:0000315"/>
    <property type="project" value="FlyBase"/>
</dbReference>
<dbReference type="GO" id="GO:0006508">
    <property type="term" value="P:proteolysis"/>
    <property type="evidence" value="ECO:0000314"/>
    <property type="project" value="FlyBase"/>
</dbReference>
<dbReference type="GO" id="GO:0002027">
    <property type="term" value="P:regulation of heart rate"/>
    <property type="evidence" value="ECO:0000315"/>
    <property type="project" value="FlyBase"/>
</dbReference>
<dbReference type="CDD" id="cd06461">
    <property type="entry name" value="M2_ACE"/>
    <property type="match status" value="1"/>
</dbReference>
<dbReference type="Gene3D" id="1.10.1370.30">
    <property type="match status" value="1"/>
</dbReference>
<dbReference type="InterPro" id="IPR001548">
    <property type="entry name" value="Peptidase_M2"/>
</dbReference>
<dbReference type="PANTHER" id="PTHR10514">
    <property type="entry name" value="ANGIOTENSIN-CONVERTING ENZYME"/>
    <property type="match status" value="1"/>
</dbReference>
<dbReference type="PANTHER" id="PTHR10514:SF44">
    <property type="entry name" value="ANGIOTENSIN-CONVERTING ENZYME-RELATED"/>
    <property type="match status" value="1"/>
</dbReference>
<dbReference type="Pfam" id="PF01401">
    <property type="entry name" value="Peptidase_M2"/>
    <property type="match status" value="1"/>
</dbReference>
<dbReference type="PRINTS" id="PR00791">
    <property type="entry name" value="PEPDIPTASEA"/>
</dbReference>
<dbReference type="SUPFAM" id="SSF55486">
    <property type="entry name" value="Metalloproteases ('zincins'), catalytic domain"/>
    <property type="match status" value="1"/>
</dbReference>
<dbReference type="PROSITE" id="PS52011">
    <property type="entry name" value="PEPTIDASE_M2"/>
    <property type="match status" value="1"/>
</dbReference>
<dbReference type="PROSITE" id="PS00142">
    <property type="entry name" value="ZINC_PROTEASE"/>
    <property type="match status" value="1"/>
</dbReference>
<sequence>MGACNITVLLLVIMLWLPHGLSMGNSCSASVLEARRFFELENEQLRRRFHEEFLSGYNYNTNVTEANRQAMIEVYARNAELNKRLAQQIKSSDYVQSEDADIRRQAEHLSKLGASALNADDYLALQNAISSMQTNYATATVCSYTNRSDCSLTLEPHIQERLSHSRDPAELAWYWREWHDKSGTPMRQNFAEYVRLTRKASQLNGHRSYADYWVQFYEDPDFERQLDATFKQLLPFYRQLHGYVRFRLRQHYGPDVMPAEGNIPISLLGNMWGQSWNELLDLFTPYPEKPFVDVKAEMEKQGYTVQKLFELGDQFFQSLGMRALPPSFWNLSVLTRPDDRHVVCHASAWDFYQDSDVRIKMCTEVDSHYFYVVHHELGHIQYYLQYEQQPAVYRGAPNPGFHEAVGDVIALSVMSAKHLKAIGLIENGRLDEKSRINQLFKQALSKIVFLPFGYAVDKYRYAVFRNELDESQWNCGFWQMRSEFGGVEPPVFRTEKDFDPPAKYHIDADVEYLRYFAAHIFQFQFHKALCRKAGQYAPNNSRLTLDNCDIFGSKAAGRSLSQFLSKGNSRHWKEVLEEFTGETEMDPAALLEYFEPLYQWLKQENSRLGVPLGWGPTDKIPSDCCGTFST</sequence>
<feature type="signal peptide" evidence="2">
    <location>
        <begin position="1"/>
        <end position="22"/>
    </location>
</feature>
<feature type="chain" id="PRO_0000028564" description="Angiotensin-converting enzyme-related protein">
    <location>
        <begin position="23"/>
        <end position="630"/>
    </location>
</feature>
<feature type="domain" description="Peptidase M2" evidence="3">
    <location>
        <begin position="28"/>
        <end position="615"/>
    </location>
</feature>
<feature type="active site" description="Proton acceptor" evidence="3">
    <location>
        <position position="376"/>
    </location>
</feature>
<feature type="active site" description="Proton donor" evidence="3">
    <location>
        <position position="505"/>
    </location>
</feature>
<feature type="binding site" evidence="3">
    <location>
        <position position="375"/>
    </location>
    <ligand>
        <name>Zn(2+)</name>
        <dbReference type="ChEBI" id="CHEBI:29105"/>
        <note>catalytic</note>
    </ligand>
</feature>
<feature type="binding site" evidence="3">
    <location>
        <position position="379"/>
    </location>
    <ligand>
        <name>Zn(2+)</name>
        <dbReference type="ChEBI" id="CHEBI:29105"/>
        <note>catalytic</note>
    </ligand>
</feature>
<feature type="binding site" evidence="3">
    <location>
        <position position="403"/>
    </location>
    <ligand>
        <name>Zn(2+)</name>
        <dbReference type="ChEBI" id="CHEBI:29105"/>
        <note>catalytic</note>
    </ligand>
</feature>
<feature type="disulfide bond" evidence="3">
    <location>
        <begin position="142"/>
        <end position="150"/>
    </location>
</feature>
<feature type="disulfide bond" evidence="3">
    <location>
        <begin position="344"/>
        <end position="362"/>
    </location>
</feature>
<feature type="disulfide bond" evidence="3">
    <location>
        <begin position="530"/>
        <end position="548"/>
    </location>
</feature>
<feature type="sequence conflict" description="In Ref. 1; CAA65632." evidence="7" ref="1">
    <original>F</original>
    <variation>L</variation>
    <location>
        <position position="236"/>
    </location>
</feature>
<feature type="sequence conflict" description="In Ref. 1; CAA65632." evidence="7" ref="1">
    <original>H</original>
    <variation>Q</variation>
    <location>
        <position position="341"/>
    </location>
</feature>
<feature type="sequence conflict" description="In Ref. 1; CAA65632." evidence="7" ref="1">
    <original>A</original>
    <variation>V</variation>
    <location>
        <position position="528"/>
    </location>
</feature>
<accession>Q9VLJ6</accession>
<accession>Q24222</accession>
<reference key="1">
    <citation type="journal article" date="1996" name="Gene">
        <title>The Acer gene of Drosophila codes for an angiotensin-converting enzyme homologue.</title>
        <authorList>
            <person name="Taylor C.A.M."/>
            <person name="Coates D."/>
            <person name="Shirras A.D."/>
        </authorList>
    </citation>
    <scope>NUCLEOTIDE SEQUENCE [MRNA]</scope>
    <scope>DEVELOPMENTAL STAGE</scope>
</reference>
<reference key="2">
    <citation type="journal article" date="2000" name="Science">
        <title>The genome sequence of Drosophila melanogaster.</title>
        <authorList>
            <person name="Adams M.D."/>
            <person name="Celniker S.E."/>
            <person name="Holt R.A."/>
            <person name="Evans C.A."/>
            <person name="Gocayne J.D."/>
            <person name="Amanatides P.G."/>
            <person name="Scherer S.E."/>
            <person name="Li P.W."/>
            <person name="Hoskins R.A."/>
            <person name="Galle R.F."/>
            <person name="George R.A."/>
            <person name="Lewis S.E."/>
            <person name="Richards S."/>
            <person name="Ashburner M."/>
            <person name="Henderson S.N."/>
            <person name="Sutton G.G."/>
            <person name="Wortman J.R."/>
            <person name="Yandell M.D."/>
            <person name="Zhang Q."/>
            <person name="Chen L.X."/>
            <person name="Brandon R.C."/>
            <person name="Rogers Y.-H.C."/>
            <person name="Blazej R.G."/>
            <person name="Champe M."/>
            <person name="Pfeiffer B.D."/>
            <person name="Wan K.H."/>
            <person name="Doyle C."/>
            <person name="Baxter E.G."/>
            <person name="Helt G."/>
            <person name="Nelson C.R."/>
            <person name="Miklos G.L.G."/>
            <person name="Abril J.F."/>
            <person name="Agbayani A."/>
            <person name="An H.-J."/>
            <person name="Andrews-Pfannkoch C."/>
            <person name="Baldwin D."/>
            <person name="Ballew R.M."/>
            <person name="Basu A."/>
            <person name="Baxendale J."/>
            <person name="Bayraktaroglu L."/>
            <person name="Beasley E.M."/>
            <person name="Beeson K.Y."/>
            <person name="Benos P.V."/>
            <person name="Berman B.P."/>
            <person name="Bhandari D."/>
            <person name="Bolshakov S."/>
            <person name="Borkova D."/>
            <person name="Botchan M.R."/>
            <person name="Bouck J."/>
            <person name="Brokstein P."/>
            <person name="Brottier P."/>
            <person name="Burtis K.C."/>
            <person name="Busam D.A."/>
            <person name="Butler H."/>
            <person name="Cadieu E."/>
            <person name="Center A."/>
            <person name="Chandra I."/>
            <person name="Cherry J.M."/>
            <person name="Cawley S."/>
            <person name="Dahlke C."/>
            <person name="Davenport L.B."/>
            <person name="Davies P."/>
            <person name="de Pablos B."/>
            <person name="Delcher A."/>
            <person name="Deng Z."/>
            <person name="Mays A.D."/>
            <person name="Dew I."/>
            <person name="Dietz S.M."/>
            <person name="Dodson K."/>
            <person name="Doup L.E."/>
            <person name="Downes M."/>
            <person name="Dugan-Rocha S."/>
            <person name="Dunkov B.C."/>
            <person name="Dunn P."/>
            <person name="Durbin K.J."/>
            <person name="Evangelista C.C."/>
            <person name="Ferraz C."/>
            <person name="Ferriera S."/>
            <person name="Fleischmann W."/>
            <person name="Fosler C."/>
            <person name="Gabrielian A.E."/>
            <person name="Garg N.S."/>
            <person name="Gelbart W.M."/>
            <person name="Glasser K."/>
            <person name="Glodek A."/>
            <person name="Gong F."/>
            <person name="Gorrell J.H."/>
            <person name="Gu Z."/>
            <person name="Guan P."/>
            <person name="Harris M."/>
            <person name="Harris N.L."/>
            <person name="Harvey D.A."/>
            <person name="Heiman T.J."/>
            <person name="Hernandez J.R."/>
            <person name="Houck J."/>
            <person name="Hostin D."/>
            <person name="Houston K.A."/>
            <person name="Howland T.J."/>
            <person name="Wei M.-H."/>
            <person name="Ibegwam C."/>
            <person name="Jalali M."/>
            <person name="Kalush F."/>
            <person name="Karpen G.H."/>
            <person name="Ke Z."/>
            <person name="Kennison J.A."/>
            <person name="Ketchum K.A."/>
            <person name="Kimmel B.E."/>
            <person name="Kodira C.D."/>
            <person name="Kraft C.L."/>
            <person name="Kravitz S."/>
            <person name="Kulp D."/>
            <person name="Lai Z."/>
            <person name="Lasko P."/>
            <person name="Lei Y."/>
            <person name="Levitsky A.A."/>
            <person name="Li J.H."/>
            <person name="Li Z."/>
            <person name="Liang Y."/>
            <person name="Lin X."/>
            <person name="Liu X."/>
            <person name="Mattei B."/>
            <person name="McIntosh T.C."/>
            <person name="McLeod M.P."/>
            <person name="McPherson D."/>
            <person name="Merkulov G."/>
            <person name="Milshina N.V."/>
            <person name="Mobarry C."/>
            <person name="Morris J."/>
            <person name="Moshrefi A."/>
            <person name="Mount S.M."/>
            <person name="Moy M."/>
            <person name="Murphy B."/>
            <person name="Murphy L."/>
            <person name="Muzny D.M."/>
            <person name="Nelson D.L."/>
            <person name="Nelson D.R."/>
            <person name="Nelson K.A."/>
            <person name="Nixon K."/>
            <person name="Nusskern D.R."/>
            <person name="Pacleb J.M."/>
            <person name="Palazzolo M."/>
            <person name="Pittman G.S."/>
            <person name="Pan S."/>
            <person name="Pollard J."/>
            <person name="Puri V."/>
            <person name="Reese M.G."/>
            <person name="Reinert K."/>
            <person name="Remington K."/>
            <person name="Saunders R.D.C."/>
            <person name="Scheeler F."/>
            <person name="Shen H."/>
            <person name="Shue B.C."/>
            <person name="Siden-Kiamos I."/>
            <person name="Simpson M."/>
            <person name="Skupski M.P."/>
            <person name="Smith T.J."/>
            <person name="Spier E."/>
            <person name="Spradling A.C."/>
            <person name="Stapleton M."/>
            <person name="Strong R."/>
            <person name="Sun E."/>
            <person name="Svirskas R."/>
            <person name="Tector C."/>
            <person name="Turner R."/>
            <person name="Venter E."/>
            <person name="Wang A.H."/>
            <person name="Wang X."/>
            <person name="Wang Z.-Y."/>
            <person name="Wassarman D.A."/>
            <person name="Weinstock G.M."/>
            <person name="Weissenbach J."/>
            <person name="Williams S.M."/>
            <person name="Woodage T."/>
            <person name="Worley K.C."/>
            <person name="Wu D."/>
            <person name="Yang S."/>
            <person name="Yao Q.A."/>
            <person name="Ye J."/>
            <person name="Yeh R.-F."/>
            <person name="Zaveri J.S."/>
            <person name="Zhan M."/>
            <person name="Zhang G."/>
            <person name="Zhao Q."/>
            <person name="Zheng L."/>
            <person name="Zheng X.H."/>
            <person name="Zhong F.N."/>
            <person name="Zhong W."/>
            <person name="Zhou X."/>
            <person name="Zhu S.C."/>
            <person name="Zhu X."/>
            <person name="Smith H.O."/>
            <person name="Gibbs R.A."/>
            <person name="Myers E.W."/>
            <person name="Rubin G.M."/>
            <person name="Venter J.C."/>
        </authorList>
    </citation>
    <scope>NUCLEOTIDE SEQUENCE [LARGE SCALE GENOMIC DNA]</scope>
    <source>
        <strain>Berkeley</strain>
    </source>
</reference>
<reference key="3">
    <citation type="journal article" date="2002" name="Genome Biol.">
        <title>Annotation of the Drosophila melanogaster euchromatic genome: a systematic review.</title>
        <authorList>
            <person name="Misra S."/>
            <person name="Crosby M.A."/>
            <person name="Mungall C.J."/>
            <person name="Matthews B.B."/>
            <person name="Campbell K.S."/>
            <person name="Hradecky P."/>
            <person name="Huang Y."/>
            <person name="Kaminker J.S."/>
            <person name="Millburn G.H."/>
            <person name="Prochnik S.E."/>
            <person name="Smith C.D."/>
            <person name="Tupy J.L."/>
            <person name="Whitfield E.J."/>
            <person name="Bayraktaroglu L."/>
            <person name="Berman B.P."/>
            <person name="Bettencourt B.R."/>
            <person name="Celniker S.E."/>
            <person name="de Grey A.D.N.J."/>
            <person name="Drysdale R.A."/>
            <person name="Harris N.L."/>
            <person name="Richter J."/>
            <person name="Russo S."/>
            <person name="Schroeder A.J."/>
            <person name="Shu S.Q."/>
            <person name="Stapleton M."/>
            <person name="Yamada C."/>
            <person name="Ashburner M."/>
            <person name="Gelbart W.M."/>
            <person name="Rubin G.M."/>
            <person name="Lewis S.E."/>
        </authorList>
    </citation>
    <scope>GENOME REANNOTATION</scope>
    <source>
        <strain>Berkeley</strain>
    </source>
</reference>
<reference key="4">
    <citation type="journal article" date="2002" name="Genome Biol.">
        <title>A Drosophila full-length cDNA resource.</title>
        <authorList>
            <person name="Stapleton M."/>
            <person name="Carlson J.W."/>
            <person name="Brokstein P."/>
            <person name="Yu C."/>
            <person name="Champe M."/>
            <person name="George R.A."/>
            <person name="Guarin H."/>
            <person name="Kronmiller B."/>
            <person name="Pacleb J.M."/>
            <person name="Park S."/>
            <person name="Wan K.H."/>
            <person name="Rubin G.M."/>
            <person name="Celniker S.E."/>
        </authorList>
    </citation>
    <scope>NUCLEOTIDE SEQUENCE [LARGE SCALE MRNA]</scope>
    <source>
        <strain>Berkeley</strain>
        <tissue>Embryo</tissue>
    </source>
</reference>
<reference key="5">
    <citation type="journal article" date="1998" name="Eur. J. Biochem.">
        <title>The Drosophila melanogaster-related angiotensin-I-converting enzymes Acer and Ance -- distinct enzymic characteristics and alternative expression during pupal development.</title>
        <authorList>
            <person name="Houard X."/>
            <person name="Williams T.A."/>
            <person name="Michaud A."/>
            <person name="Dani P."/>
            <person name="Isaac R.E."/>
            <person name="Shirras A.D."/>
            <person name="Coates D."/>
            <person name="Corvol P."/>
        </authorList>
    </citation>
    <scope>BIOPHYSICOCHEMICAL PROPERTIES</scope>
    <scope>GLYCOSYLATION</scope>
    <scope>SUBCELLULAR LOCATION</scope>
    <scope>ACTIVITY REGULATION</scope>
</reference>
<reference key="6">
    <citation type="journal article" date="2002" name="Nature">
        <title>Angiotensin-converting enzyme 2 is an essential regulator of heart function.</title>
        <authorList>
            <person name="Crackower M.A."/>
            <person name="Sarao R."/>
            <person name="Oudit G.Y."/>
            <person name="Yagil C."/>
            <person name="Kozieradzki I."/>
            <person name="Scanga S.E."/>
            <person name="Oliveira-dos-Santos A.J."/>
            <person name="da Costa J."/>
            <person name="Zhang L."/>
            <person name="Pei Y."/>
            <person name="Scholey J."/>
            <person name="Ferrario C.M."/>
            <person name="Manoukian A.S."/>
            <person name="Chappell M.C."/>
            <person name="Backx P.H."/>
            <person name="Yagil Y."/>
            <person name="Penninger J.M."/>
        </authorList>
    </citation>
    <scope>FUNCTION</scope>
    <scope>DISRUPTION PHENOTYPE</scope>
</reference>
<keyword id="KW-0121">Carboxypeptidase</keyword>
<keyword id="KW-1015">Disulfide bond</keyword>
<keyword id="KW-0325">Glycoprotein</keyword>
<keyword id="KW-0378">Hydrolase</keyword>
<keyword id="KW-0479">Metal-binding</keyword>
<keyword id="KW-0482">Metalloprotease</keyword>
<keyword id="KW-0645">Protease</keyword>
<keyword id="KW-1185">Reference proteome</keyword>
<keyword id="KW-0964">Secreted</keyword>
<keyword id="KW-0732">Signal</keyword>
<keyword id="KW-0862">Zinc</keyword>
<evidence type="ECO:0000250" key="1"/>
<evidence type="ECO:0000255" key="2"/>
<evidence type="ECO:0000255" key="3">
    <source>
        <dbReference type="PROSITE-ProRule" id="PRU01355"/>
    </source>
</evidence>
<evidence type="ECO:0000269" key="4">
    <source>
    </source>
</evidence>
<evidence type="ECO:0000269" key="5">
    <source>
    </source>
</evidence>
<evidence type="ECO:0000269" key="6">
    <source>
    </source>
</evidence>
<evidence type="ECO:0000305" key="7"/>
<organism>
    <name type="scientific">Drosophila melanogaster</name>
    <name type="common">Fruit fly</name>
    <dbReference type="NCBI Taxonomy" id="7227"/>
    <lineage>
        <taxon>Eukaryota</taxon>
        <taxon>Metazoa</taxon>
        <taxon>Ecdysozoa</taxon>
        <taxon>Arthropoda</taxon>
        <taxon>Hexapoda</taxon>
        <taxon>Insecta</taxon>
        <taxon>Pterygota</taxon>
        <taxon>Neoptera</taxon>
        <taxon>Endopterygota</taxon>
        <taxon>Diptera</taxon>
        <taxon>Brachycera</taxon>
        <taxon>Muscomorpha</taxon>
        <taxon>Ephydroidea</taxon>
        <taxon>Drosophilidae</taxon>
        <taxon>Drosophila</taxon>
        <taxon>Sophophora</taxon>
    </lineage>
</organism>